<keyword id="KW-1185">Reference proteome</keyword>
<name>Y1607_MYCLE</name>
<organism>
    <name type="scientific">Mycobacterium leprae (strain TN)</name>
    <dbReference type="NCBI Taxonomy" id="272631"/>
    <lineage>
        <taxon>Bacteria</taxon>
        <taxon>Bacillati</taxon>
        <taxon>Actinomycetota</taxon>
        <taxon>Actinomycetes</taxon>
        <taxon>Mycobacteriales</taxon>
        <taxon>Mycobacteriaceae</taxon>
        <taxon>Mycobacterium</taxon>
    </lineage>
</organism>
<protein>
    <recommendedName>
        <fullName>UPF0102 protein ML1607</fullName>
    </recommendedName>
</protein>
<reference key="1">
    <citation type="journal article" date="2001" name="Nature">
        <title>Massive gene decay in the leprosy bacillus.</title>
        <authorList>
            <person name="Cole S.T."/>
            <person name="Eiglmeier K."/>
            <person name="Parkhill J."/>
            <person name="James K.D."/>
            <person name="Thomson N.R."/>
            <person name="Wheeler P.R."/>
            <person name="Honore N."/>
            <person name="Garnier T."/>
            <person name="Churcher C.M."/>
            <person name="Harris D.E."/>
            <person name="Mungall K.L."/>
            <person name="Basham D."/>
            <person name="Brown D."/>
            <person name="Chillingworth T."/>
            <person name="Connor R."/>
            <person name="Davies R.M."/>
            <person name="Devlin K."/>
            <person name="Duthoy S."/>
            <person name="Feltwell T."/>
            <person name="Fraser A."/>
            <person name="Hamlin N."/>
            <person name="Holroyd S."/>
            <person name="Hornsby T."/>
            <person name="Jagels K."/>
            <person name="Lacroix C."/>
            <person name="Maclean J."/>
            <person name="Moule S."/>
            <person name="Murphy L.D."/>
            <person name="Oliver K."/>
            <person name="Quail M.A."/>
            <person name="Rajandream M.A."/>
            <person name="Rutherford K.M."/>
            <person name="Rutter S."/>
            <person name="Seeger K."/>
            <person name="Simon S."/>
            <person name="Simmonds M."/>
            <person name="Skelton J."/>
            <person name="Squares R."/>
            <person name="Squares S."/>
            <person name="Stevens K."/>
            <person name="Taylor K."/>
            <person name="Whitehead S."/>
            <person name="Woodward J.R."/>
            <person name="Barrell B.G."/>
        </authorList>
    </citation>
    <scope>NUCLEOTIDE SEQUENCE [LARGE SCALE GENOMIC DNA]</scope>
    <source>
        <strain>TN</strain>
    </source>
</reference>
<feature type="chain" id="PRO_0000167362" description="UPF0102 protein ML1607">
    <location>
        <begin position="1"/>
        <end position="96"/>
    </location>
</feature>
<comment type="similarity">
    <text evidence="1">Belongs to the UPF0102 family.</text>
</comment>
<comment type="sequence caution" evidence="1">
    <conflict type="erroneous initiation">
        <sequence resource="EMBL-CDS" id="CAB10643"/>
    </conflict>
</comment>
<sequence length="96" mass="11019">MTTHKAMTRVQLEAMGEVFAVDNLTRMGLRGLHCNWRCRYGECDVIASETAHRTVVSRLRSIAATVMEGSRRSAPEQKVRWLRWLAGLWPANQDEF</sequence>
<proteinExistence type="inferred from homology"/>
<evidence type="ECO:0000305" key="1"/>
<gene>
    <name type="ordered locus">ML1607</name>
    <name type="ORF">MLCB250.49</name>
</gene>
<accession>O33024</accession>
<dbReference type="EMBL" id="Z97369">
    <property type="protein sequence ID" value="CAB10643.1"/>
    <property type="status" value="ALT_INIT"/>
    <property type="molecule type" value="Genomic_DNA"/>
</dbReference>
<dbReference type="EMBL" id="AL583922">
    <property type="protein sequence ID" value="CAC30558.1"/>
    <property type="molecule type" value="Genomic_DNA"/>
</dbReference>
<dbReference type="PIR" id="A87110">
    <property type="entry name" value="A87110"/>
</dbReference>
<dbReference type="RefSeq" id="NP_302108.1">
    <property type="nucleotide sequence ID" value="NC_002677.1"/>
</dbReference>
<dbReference type="RefSeq" id="WP_010908429.1">
    <property type="nucleotide sequence ID" value="NC_002677.1"/>
</dbReference>
<dbReference type="SMR" id="O33024"/>
<dbReference type="KEGG" id="mle:ML1607"/>
<dbReference type="PATRIC" id="fig|272631.5.peg.3028"/>
<dbReference type="Leproma" id="ML1607"/>
<dbReference type="eggNOG" id="COG0792">
    <property type="taxonomic scope" value="Bacteria"/>
</dbReference>
<dbReference type="HOGENOM" id="CLU_115353_2_3_11"/>
<dbReference type="OrthoDB" id="9794876at2"/>
<dbReference type="Proteomes" id="UP000000806">
    <property type="component" value="Chromosome"/>
</dbReference>
<dbReference type="GO" id="GO:0003676">
    <property type="term" value="F:nucleic acid binding"/>
    <property type="evidence" value="ECO:0007669"/>
    <property type="project" value="InterPro"/>
</dbReference>
<dbReference type="Gene3D" id="3.40.1350.10">
    <property type="match status" value="1"/>
</dbReference>
<dbReference type="InterPro" id="IPR011856">
    <property type="entry name" value="tRNA_endonuc-like_dom_sf"/>
</dbReference>
<dbReference type="InterPro" id="IPR003509">
    <property type="entry name" value="UPF0102_YraN-like"/>
</dbReference>
<dbReference type="Pfam" id="PF02021">
    <property type="entry name" value="UPF0102"/>
    <property type="match status" value="1"/>
</dbReference>